<organism>
    <name type="scientific">Rattus norvegicus</name>
    <name type="common">Rat</name>
    <dbReference type="NCBI Taxonomy" id="10116"/>
    <lineage>
        <taxon>Eukaryota</taxon>
        <taxon>Metazoa</taxon>
        <taxon>Chordata</taxon>
        <taxon>Craniata</taxon>
        <taxon>Vertebrata</taxon>
        <taxon>Euteleostomi</taxon>
        <taxon>Mammalia</taxon>
        <taxon>Eutheria</taxon>
        <taxon>Euarchontoglires</taxon>
        <taxon>Glires</taxon>
        <taxon>Rodentia</taxon>
        <taxon>Myomorpha</taxon>
        <taxon>Muroidea</taxon>
        <taxon>Muridae</taxon>
        <taxon>Murinae</taxon>
        <taxon>Rattus</taxon>
    </lineage>
</organism>
<evidence type="ECO:0000250" key="1">
    <source>
        <dbReference type="UniProtKB" id="P01031"/>
    </source>
</evidence>
<evidence type="ECO:0000255" key="2"/>
<evidence type="ECO:0000255" key="3">
    <source>
        <dbReference type="PROSITE-ProRule" id="PRU00022"/>
    </source>
</evidence>
<evidence type="ECO:0000255" key="4">
    <source>
        <dbReference type="PROSITE-ProRule" id="PRU00295"/>
    </source>
</evidence>
<evidence type="ECO:0000269" key="5">
    <source>
    </source>
</evidence>
<evidence type="ECO:0000269" key="6">
    <source ref="3"/>
</evidence>
<evidence type="ECO:0000305" key="7"/>
<evidence type="ECO:0007744" key="8">
    <source>
        <dbReference type="PDB" id="6JV7"/>
    </source>
</evidence>
<evidence type="ECO:0007744" key="9">
    <source>
        <dbReference type="PDB" id="6JV8"/>
    </source>
</evidence>
<evidence type="ECO:0007829" key="10">
    <source>
        <dbReference type="PDB" id="6JV7"/>
    </source>
</evidence>
<reference key="1">
    <citation type="journal article" date="2004" name="Nature">
        <title>Genome sequence of the Brown Norway rat yields insights into mammalian evolution.</title>
        <authorList>
            <person name="Gibbs R.A."/>
            <person name="Weinstock G.M."/>
            <person name="Metzker M.L."/>
            <person name="Muzny D.M."/>
            <person name="Sodergren E.J."/>
            <person name="Scherer S."/>
            <person name="Scott G."/>
            <person name="Steffen D."/>
            <person name="Worley K.C."/>
            <person name="Burch P.E."/>
            <person name="Okwuonu G."/>
            <person name="Hines S."/>
            <person name="Lewis L."/>
            <person name="Deramo C."/>
            <person name="Delgado O."/>
            <person name="Dugan-Rocha S."/>
            <person name="Miner G."/>
            <person name="Morgan M."/>
            <person name="Hawes A."/>
            <person name="Gill R."/>
            <person name="Holt R.A."/>
            <person name="Adams M.D."/>
            <person name="Amanatides P.G."/>
            <person name="Baden-Tillson H."/>
            <person name="Barnstead M."/>
            <person name="Chin S."/>
            <person name="Evans C.A."/>
            <person name="Ferriera S."/>
            <person name="Fosler C."/>
            <person name="Glodek A."/>
            <person name="Gu Z."/>
            <person name="Jennings D."/>
            <person name="Kraft C.L."/>
            <person name="Nguyen T."/>
            <person name="Pfannkoch C.M."/>
            <person name="Sitter C."/>
            <person name="Sutton G.G."/>
            <person name="Venter J.C."/>
            <person name="Woodage T."/>
            <person name="Smith D."/>
            <person name="Lee H.-M."/>
            <person name="Gustafson E."/>
            <person name="Cahill P."/>
            <person name="Kana A."/>
            <person name="Doucette-Stamm L."/>
            <person name="Weinstock K."/>
            <person name="Fechtel K."/>
            <person name="Weiss R.B."/>
            <person name="Dunn D.M."/>
            <person name="Green E.D."/>
            <person name="Blakesley R.W."/>
            <person name="Bouffard G.G."/>
            <person name="De Jong P.J."/>
            <person name="Osoegawa K."/>
            <person name="Zhu B."/>
            <person name="Marra M."/>
            <person name="Schein J."/>
            <person name="Bosdet I."/>
            <person name="Fjell C."/>
            <person name="Jones S."/>
            <person name="Krzywinski M."/>
            <person name="Mathewson C."/>
            <person name="Siddiqui A."/>
            <person name="Wye N."/>
            <person name="McPherson J."/>
            <person name="Zhao S."/>
            <person name="Fraser C.M."/>
            <person name="Shetty J."/>
            <person name="Shatsman S."/>
            <person name="Geer K."/>
            <person name="Chen Y."/>
            <person name="Abramzon S."/>
            <person name="Nierman W.C."/>
            <person name="Havlak P.H."/>
            <person name="Chen R."/>
            <person name="Durbin K.J."/>
            <person name="Egan A."/>
            <person name="Ren Y."/>
            <person name="Song X.-Z."/>
            <person name="Li B."/>
            <person name="Liu Y."/>
            <person name="Qin X."/>
            <person name="Cawley S."/>
            <person name="Cooney A.J."/>
            <person name="D'Souza L.M."/>
            <person name="Martin K."/>
            <person name="Wu J.Q."/>
            <person name="Gonzalez-Garay M.L."/>
            <person name="Jackson A.R."/>
            <person name="Kalafus K.J."/>
            <person name="McLeod M.P."/>
            <person name="Milosavljevic A."/>
            <person name="Virk D."/>
            <person name="Volkov A."/>
            <person name="Wheeler D.A."/>
            <person name="Zhang Z."/>
            <person name="Bailey J.A."/>
            <person name="Eichler E.E."/>
            <person name="Tuzun E."/>
            <person name="Birney E."/>
            <person name="Mongin E."/>
            <person name="Ureta-Vidal A."/>
            <person name="Woodwark C."/>
            <person name="Zdobnov E."/>
            <person name="Bork P."/>
            <person name="Suyama M."/>
            <person name="Torrents D."/>
            <person name="Alexandersson M."/>
            <person name="Trask B.J."/>
            <person name="Young J.M."/>
            <person name="Huang H."/>
            <person name="Wang H."/>
            <person name="Xing H."/>
            <person name="Daniels S."/>
            <person name="Gietzen D."/>
            <person name="Schmidt J."/>
            <person name="Stevens K."/>
            <person name="Vitt U."/>
            <person name="Wingrove J."/>
            <person name="Camara F."/>
            <person name="Mar Alba M."/>
            <person name="Abril J.F."/>
            <person name="Guigo R."/>
            <person name="Smit A."/>
            <person name="Dubchak I."/>
            <person name="Rubin E.M."/>
            <person name="Couronne O."/>
            <person name="Poliakov A."/>
            <person name="Huebner N."/>
            <person name="Ganten D."/>
            <person name="Goesele C."/>
            <person name="Hummel O."/>
            <person name="Kreitler T."/>
            <person name="Lee Y.-A."/>
            <person name="Monti J."/>
            <person name="Schulz H."/>
            <person name="Zimdahl H."/>
            <person name="Himmelbauer H."/>
            <person name="Lehrach H."/>
            <person name="Jacob H.J."/>
            <person name="Bromberg S."/>
            <person name="Gullings-Handley J."/>
            <person name="Jensen-Seaman M.I."/>
            <person name="Kwitek A.E."/>
            <person name="Lazar J."/>
            <person name="Pasko D."/>
            <person name="Tonellato P.J."/>
            <person name="Twigger S."/>
            <person name="Ponting C.P."/>
            <person name="Duarte J.M."/>
            <person name="Rice S."/>
            <person name="Goodstadt L."/>
            <person name="Beatson S.A."/>
            <person name="Emes R.D."/>
            <person name="Winter E.E."/>
            <person name="Webber C."/>
            <person name="Brandt P."/>
            <person name="Nyakatura G."/>
            <person name="Adetobi M."/>
            <person name="Chiaromonte F."/>
            <person name="Elnitski L."/>
            <person name="Eswara P."/>
            <person name="Hardison R.C."/>
            <person name="Hou M."/>
            <person name="Kolbe D."/>
            <person name="Makova K."/>
            <person name="Miller W."/>
            <person name="Nekrutenko A."/>
            <person name="Riemer C."/>
            <person name="Schwartz S."/>
            <person name="Taylor J."/>
            <person name="Yang S."/>
            <person name="Zhang Y."/>
            <person name="Lindpaintner K."/>
            <person name="Andrews T.D."/>
            <person name="Caccamo M."/>
            <person name="Clamp M."/>
            <person name="Clarke L."/>
            <person name="Curwen V."/>
            <person name="Durbin R.M."/>
            <person name="Eyras E."/>
            <person name="Searle S.M."/>
            <person name="Cooper G.M."/>
            <person name="Batzoglou S."/>
            <person name="Brudno M."/>
            <person name="Sidow A."/>
            <person name="Stone E.A."/>
            <person name="Payseur B.A."/>
            <person name="Bourque G."/>
            <person name="Lopez-Otin C."/>
            <person name="Puente X.S."/>
            <person name="Chakrabarti K."/>
            <person name="Chatterji S."/>
            <person name="Dewey C."/>
            <person name="Pachter L."/>
            <person name="Bray N."/>
            <person name="Yap V.B."/>
            <person name="Caspi A."/>
            <person name="Tesler G."/>
            <person name="Pevzner P.A."/>
            <person name="Haussler D."/>
            <person name="Roskin K.M."/>
            <person name="Baertsch R."/>
            <person name="Clawson H."/>
            <person name="Furey T.S."/>
            <person name="Hinrichs A.S."/>
            <person name="Karolchik D."/>
            <person name="Kent W.J."/>
            <person name="Rosenbloom K.R."/>
            <person name="Trumbower H."/>
            <person name="Weirauch M."/>
            <person name="Cooper D.N."/>
            <person name="Stenson P.D."/>
            <person name="Ma B."/>
            <person name="Brent M."/>
            <person name="Arumugam M."/>
            <person name="Shteynberg D."/>
            <person name="Copley R.R."/>
            <person name="Taylor M.S."/>
            <person name="Riethman H."/>
            <person name="Mudunuri U."/>
            <person name="Peterson J."/>
            <person name="Guyer M."/>
            <person name="Felsenfeld A."/>
            <person name="Old S."/>
            <person name="Mockrin S."/>
            <person name="Collins F.S."/>
        </authorList>
    </citation>
    <scope>NUCLEOTIDE SEQUENCE [LARGE SCALE GENOMIC DNA]</scope>
    <source>
        <strain>Brown Norway</strain>
    </source>
</reference>
<reference key="2">
    <citation type="journal article" date="1997" name="Biochim. Biophys. Acta">
        <title>Nucleotide and corrected amino acid sequence of the functional recombinant rat anaphylatoxin C5a.</title>
        <authorList>
            <person name="Rothermel E."/>
            <person name="Rolf O."/>
            <person name="Goetze O."/>
            <person name="Zwirner J."/>
        </authorList>
    </citation>
    <scope>NUCLEOTIDE SEQUENCE [MRNA] OF 679-755</scope>
    <source>
        <strain>Lewis</strain>
        <tissue>Liver</tissue>
    </source>
</reference>
<reference key="3">
    <citation type="journal article" date="1985" name="Complement">
        <title>Characterization of rat C5a, a uniquely active spasmogen.</title>
        <authorList>
            <person name="Cui L.-X."/>
            <person name="Ferreri K."/>
            <person name="Hugli T.E."/>
        </authorList>
    </citation>
    <scope>PROTEIN SEQUENCE OF 679-755</scope>
</reference>
<reference key="4">
    <citation type="journal article" date="1994" name="Protein Sci.">
        <title>Primary structure and functional characterization of rat C5a: an anaphylatoxin with unusually high potency.</title>
        <authorList>
            <person name="Cui L.-X."/>
            <person name="Carney D.F."/>
            <person name="Hugli T.E."/>
        </authorList>
    </citation>
    <scope>PROTEIN SEQUENCE OF 679-755</scope>
    <scope>SUBCELLULAR LOCATION</scope>
    <source>
        <tissue>Serum</tissue>
    </source>
</reference>
<reference evidence="8 9" key="5">
    <citation type="submission" date="2019-04" db="PDB data bank">
        <title>Chimeric protein probes for C5a receptors through fusion of anaphylatoxin C5a core region with a small-molecule antagonist.</title>
        <authorList>
            <person name="Zuo C."/>
        </authorList>
    </citation>
    <scope>X-RAY CRYSTALLOGRAPHY (1.31 ANGSTROMS) OF 679-749</scope>
    <scope>DISULFIDE BONDS</scope>
</reference>
<name>CO5_RAT</name>
<dbReference type="EMBL" id="AABR07051491">
    <property type="status" value="NOT_ANNOTATED_CDS"/>
    <property type="molecule type" value="Genomic_DNA"/>
</dbReference>
<dbReference type="EMBL" id="AABR07051499">
    <property type="status" value="NOT_ANNOTATED_CDS"/>
    <property type="molecule type" value="Genomic_DNA"/>
</dbReference>
<dbReference type="EMBL" id="AABR07051492">
    <property type="status" value="NOT_ANNOTATED_CDS"/>
    <property type="molecule type" value="Genomic_DNA"/>
</dbReference>
<dbReference type="EMBL" id="AABR07051493">
    <property type="status" value="NOT_ANNOTATED_CDS"/>
    <property type="molecule type" value="Genomic_DNA"/>
</dbReference>
<dbReference type="EMBL" id="AABR07051494">
    <property type="status" value="NOT_ANNOTATED_CDS"/>
    <property type="molecule type" value="Genomic_DNA"/>
</dbReference>
<dbReference type="EMBL" id="AABR07051495">
    <property type="status" value="NOT_ANNOTATED_CDS"/>
    <property type="molecule type" value="Genomic_DNA"/>
</dbReference>
<dbReference type="EMBL" id="AABR07051496">
    <property type="status" value="NOT_ANNOTATED_CDS"/>
    <property type="molecule type" value="Genomic_DNA"/>
</dbReference>
<dbReference type="EMBL" id="AABR07051497">
    <property type="status" value="NOT_ANNOTATED_CDS"/>
    <property type="molecule type" value="Genomic_DNA"/>
</dbReference>
<dbReference type="EMBL" id="AABR07051498">
    <property type="status" value="NOT_ANNOTATED_CDS"/>
    <property type="molecule type" value="Genomic_DNA"/>
</dbReference>
<dbReference type="EMBL" id="AABR07051500">
    <property type="status" value="NOT_ANNOTATED_CDS"/>
    <property type="molecule type" value="Genomic_DNA"/>
</dbReference>
<dbReference type="EMBL" id="X91892">
    <property type="protein sequence ID" value="CAA62994.1"/>
    <property type="molecule type" value="mRNA"/>
</dbReference>
<dbReference type="PIR" id="A57689">
    <property type="entry name" value="A57689"/>
</dbReference>
<dbReference type="PDB" id="6JV7">
    <property type="method" value="X-ray"/>
    <property type="resolution" value="1.31 A"/>
    <property type="chains" value="A=679-749"/>
</dbReference>
<dbReference type="PDB" id="6JV8">
    <property type="method" value="X-ray"/>
    <property type="resolution" value="1.58 A"/>
    <property type="chains" value="A=680-755"/>
</dbReference>
<dbReference type="PDBsum" id="6JV7"/>
<dbReference type="PDBsum" id="6JV8"/>
<dbReference type="SMR" id="P08650"/>
<dbReference type="FunCoup" id="P08650">
    <property type="interactions" value="159"/>
</dbReference>
<dbReference type="STRING" id="10116.ENSRNOP00000025534"/>
<dbReference type="GlyCosmos" id="P08650">
    <property type="glycosylation" value="6 sites, No reported glycans"/>
</dbReference>
<dbReference type="GlyGen" id="P08650">
    <property type="glycosylation" value="6 sites"/>
</dbReference>
<dbReference type="PhosphoSitePlus" id="P08650"/>
<dbReference type="PaxDb" id="10116-ENSRNOP00000025534"/>
<dbReference type="UCSC" id="RGD:2237">
    <property type="organism name" value="rat"/>
</dbReference>
<dbReference type="AGR" id="RGD:2237"/>
<dbReference type="RGD" id="2237">
    <property type="gene designation" value="C5"/>
</dbReference>
<dbReference type="VEuPathDB" id="HostDB:ENSRNOG00000018899"/>
<dbReference type="eggNOG" id="KOG1366">
    <property type="taxonomic scope" value="Eukaryota"/>
</dbReference>
<dbReference type="HOGENOM" id="CLU_001634_4_2_1"/>
<dbReference type="InParanoid" id="P08650"/>
<dbReference type="OrthoDB" id="6359008at2759"/>
<dbReference type="Reactome" id="R-RNO-166665">
    <property type="pathway name" value="Terminal pathway of complement"/>
</dbReference>
<dbReference type="Reactome" id="R-RNO-174577">
    <property type="pathway name" value="Activation of C3 and C5"/>
</dbReference>
<dbReference type="Reactome" id="R-RNO-375276">
    <property type="pathway name" value="Peptide ligand-binding receptors"/>
</dbReference>
<dbReference type="Reactome" id="R-RNO-418594">
    <property type="pathway name" value="G alpha (i) signalling events"/>
</dbReference>
<dbReference type="Reactome" id="R-RNO-977606">
    <property type="pathway name" value="Regulation of Complement cascade"/>
</dbReference>
<dbReference type="PRO" id="PR:P08650"/>
<dbReference type="Proteomes" id="UP000002494">
    <property type="component" value="Chromosome 3"/>
</dbReference>
<dbReference type="Bgee" id="ENSRNOG00000018899">
    <property type="expression patterns" value="Expressed in liver and 4 other cell types or tissues"/>
</dbReference>
<dbReference type="GO" id="GO:0005615">
    <property type="term" value="C:extracellular space"/>
    <property type="evidence" value="ECO:0000314"/>
    <property type="project" value="RGD"/>
</dbReference>
<dbReference type="GO" id="GO:0005579">
    <property type="term" value="C:membrane attack complex"/>
    <property type="evidence" value="ECO:0000266"/>
    <property type="project" value="RGD"/>
</dbReference>
<dbReference type="GO" id="GO:0031714">
    <property type="term" value="F:C5a anaphylatoxin chemotactic receptor binding"/>
    <property type="evidence" value="ECO:0000314"/>
    <property type="project" value="RGD"/>
</dbReference>
<dbReference type="GO" id="GO:0004866">
    <property type="term" value="F:endopeptidase inhibitor activity"/>
    <property type="evidence" value="ECO:0007669"/>
    <property type="project" value="InterPro"/>
</dbReference>
<dbReference type="GO" id="GO:0006935">
    <property type="term" value="P:chemotaxis"/>
    <property type="evidence" value="ECO:0000314"/>
    <property type="project" value="RGD"/>
</dbReference>
<dbReference type="GO" id="GO:0006957">
    <property type="term" value="P:complement activation, alternative pathway"/>
    <property type="evidence" value="ECO:0007669"/>
    <property type="project" value="UniProtKB-KW"/>
</dbReference>
<dbReference type="GO" id="GO:0006958">
    <property type="term" value="P:complement activation, classical pathway"/>
    <property type="evidence" value="ECO:0007669"/>
    <property type="project" value="UniProtKB-KW"/>
</dbReference>
<dbReference type="GO" id="GO:0032835">
    <property type="term" value="P:glomerulus development"/>
    <property type="evidence" value="ECO:0000266"/>
    <property type="project" value="RGD"/>
</dbReference>
<dbReference type="GO" id="GO:0001701">
    <property type="term" value="P:in utero embryonic development"/>
    <property type="evidence" value="ECO:0000266"/>
    <property type="project" value="RGD"/>
</dbReference>
<dbReference type="GO" id="GO:0090594">
    <property type="term" value="P:inflammatory response to wounding"/>
    <property type="evidence" value="ECO:0000266"/>
    <property type="project" value="RGD"/>
</dbReference>
<dbReference type="GO" id="GO:0006874">
    <property type="term" value="P:intracellular calcium ion homeostasis"/>
    <property type="evidence" value="ECO:0000314"/>
    <property type="project" value="RGD"/>
</dbReference>
<dbReference type="GO" id="GO:0001822">
    <property type="term" value="P:kidney development"/>
    <property type="evidence" value="ECO:0000266"/>
    <property type="project" value="RGD"/>
</dbReference>
<dbReference type="GO" id="GO:0031640">
    <property type="term" value="P:killing of cells of another organism"/>
    <property type="evidence" value="ECO:0007669"/>
    <property type="project" value="UniProtKB-KW"/>
</dbReference>
<dbReference type="GO" id="GO:0002523">
    <property type="term" value="P:leukocyte migration involved in inflammatory response"/>
    <property type="evidence" value="ECO:0000315"/>
    <property type="project" value="RGD"/>
</dbReference>
<dbReference type="GO" id="GO:0033602">
    <property type="term" value="P:negative regulation of dopamine secretion"/>
    <property type="evidence" value="ECO:0000314"/>
    <property type="project" value="RGD"/>
</dbReference>
<dbReference type="GO" id="GO:0010760">
    <property type="term" value="P:negative regulation of macrophage chemotaxis"/>
    <property type="evidence" value="ECO:0000266"/>
    <property type="project" value="RGD"/>
</dbReference>
<dbReference type="GO" id="GO:0010700">
    <property type="term" value="P:negative regulation of norepinephrine secretion"/>
    <property type="evidence" value="ECO:0000314"/>
    <property type="project" value="RGD"/>
</dbReference>
<dbReference type="GO" id="GO:0001780">
    <property type="term" value="P:neutrophil homeostasis"/>
    <property type="evidence" value="ECO:0000266"/>
    <property type="project" value="RGD"/>
</dbReference>
<dbReference type="GO" id="GO:0045766">
    <property type="term" value="P:positive regulation of angiogenesis"/>
    <property type="evidence" value="ECO:0000266"/>
    <property type="project" value="RGD"/>
</dbReference>
<dbReference type="GO" id="GO:0032722">
    <property type="term" value="P:positive regulation of chemokine production"/>
    <property type="evidence" value="ECO:0000266"/>
    <property type="project" value="RGD"/>
</dbReference>
<dbReference type="GO" id="GO:0050921">
    <property type="term" value="P:positive regulation of chemotaxis"/>
    <property type="evidence" value="ECO:0000314"/>
    <property type="project" value="RGD"/>
</dbReference>
<dbReference type="GO" id="GO:0007204">
    <property type="term" value="P:positive regulation of cytosolic calcium ion concentration"/>
    <property type="evidence" value="ECO:0000314"/>
    <property type="project" value="RGD"/>
</dbReference>
<dbReference type="GO" id="GO:0010575">
    <property type="term" value="P:positive regulation of vascular endothelial growth factor production"/>
    <property type="evidence" value="ECO:0000266"/>
    <property type="project" value="RGD"/>
</dbReference>
<dbReference type="CDD" id="cd00017">
    <property type="entry name" value="ANATO"/>
    <property type="match status" value="1"/>
</dbReference>
<dbReference type="CDD" id="cd02896">
    <property type="entry name" value="complement_C3_C4_C5"/>
    <property type="match status" value="1"/>
</dbReference>
<dbReference type="FunFam" id="1.20.91.20:FF:000004">
    <property type="entry name" value="Complement C5"/>
    <property type="match status" value="1"/>
</dbReference>
<dbReference type="FunFam" id="2.40.50.120:FF:000023">
    <property type="entry name" value="Complement C5"/>
    <property type="match status" value="1"/>
</dbReference>
<dbReference type="FunFam" id="2.60.40.1940:FF:000001">
    <property type="entry name" value="Complement component C3"/>
    <property type="match status" value="1"/>
</dbReference>
<dbReference type="FunFam" id="2.20.130.20:FF:000008">
    <property type="entry name" value="Complement component C5"/>
    <property type="match status" value="1"/>
</dbReference>
<dbReference type="FunFam" id="2.60.40.10:FF:001848">
    <property type="entry name" value="Complement component C5"/>
    <property type="match status" value="1"/>
</dbReference>
<dbReference type="Gene3D" id="1.50.10.20">
    <property type="match status" value="1"/>
</dbReference>
<dbReference type="Gene3D" id="2.20.130.20">
    <property type="match status" value="1"/>
</dbReference>
<dbReference type="Gene3D" id="2.40.50.120">
    <property type="match status" value="1"/>
</dbReference>
<dbReference type="Gene3D" id="2.60.120.1540">
    <property type="match status" value="1"/>
</dbReference>
<dbReference type="Gene3D" id="2.60.40.1930">
    <property type="match status" value="3"/>
</dbReference>
<dbReference type="Gene3D" id="2.60.40.1940">
    <property type="match status" value="1"/>
</dbReference>
<dbReference type="Gene3D" id="6.20.50.160">
    <property type="match status" value="1"/>
</dbReference>
<dbReference type="Gene3D" id="2.60.40.690">
    <property type="entry name" value="Alpha-macroglobulin, receptor-binding domain"/>
    <property type="match status" value="1"/>
</dbReference>
<dbReference type="Gene3D" id="1.20.91.20">
    <property type="entry name" value="Anaphylotoxins (complement system)"/>
    <property type="match status" value="1"/>
</dbReference>
<dbReference type="Gene3D" id="2.60.40.10">
    <property type="entry name" value="Immunoglobulins"/>
    <property type="match status" value="2"/>
</dbReference>
<dbReference type="InterPro" id="IPR009048">
    <property type="entry name" value="A-macroglobulin_rcpt-bd"/>
</dbReference>
<dbReference type="InterPro" id="IPR036595">
    <property type="entry name" value="A-macroglobulin_rcpt-bd_sf"/>
</dbReference>
<dbReference type="InterPro" id="IPR050473">
    <property type="entry name" value="A2M/Complement_sys"/>
</dbReference>
<dbReference type="InterPro" id="IPR011625">
    <property type="entry name" value="A2M_N_BRD"/>
</dbReference>
<dbReference type="InterPro" id="IPR011626">
    <property type="entry name" value="Alpha-macroglobulin_TED"/>
</dbReference>
<dbReference type="InterPro" id="IPR000020">
    <property type="entry name" value="Anaphylatoxin/fibulin"/>
</dbReference>
<dbReference type="InterPro" id="IPR018081">
    <property type="entry name" value="Anaphylatoxin_comp_syst"/>
</dbReference>
<dbReference type="InterPro" id="IPR041425">
    <property type="entry name" value="C3/4/5_MG1"/>
</dbReference>
<dbReference type="InterPro" id="IPR048843">
    <property type="entry name" value="C5_CUB"/>
</dbReference>
<dbReference type="InterPro" id="IPR013783">
    <property type="entry name" value="Ig-like_fold"/>
</dbReference>
<dbReference type="InterPro" id="IPR001599">
    <property type="entry name" value="Macroglobln_a2"/>
</dbReference>
<dbReference type="InterPro" id="IPR002890">
    <property type="entry name" value="MG2"/>
</dbReference>
<dbReference type="InterPro" id="IPR041555">
    <property type="entry name" value="MG3"/>
</dbReference>
<dbReference type="InterPro" id="IPR040839">
    <property type="entry name" value="MG4"/>
</dbReference>
<dbReference type="InterPro" id="IPR001134">
    <property type="entry name" value="Netrin_domain"/>
</dbReference>
<dbReference type="InterPro" id="IPR018933">
    <property type="entry name" value="Netrin_module_non-TIMP"/>
</dbReference>
<dbReference type="InterPro" id="IPR008930">
    <property type="entry name" value="Terpenoid_cyclase/PrenylTrfase"/>
</dbReference>
<dbReference type="InterPro" id="IPR008993">
    <property type="entry name" value="TIMP-like_OB-fold"/>
</dbReference>
<dbReference type="PANTHER" id="PTHR11412:SF83">
    <property type="entry name" value="COMPLEMENT C5"/>
    <property type="match status" value="1"/>
</dbReference>
<dbReference type="PANTHER" id="PTHR11412">
    <property type="entry name" value="MACROGLOBULIN / COMPLEMENT"/>
    <property type="match status" value="1"/>
</dbReference>
<dbReference type="Pfam" id="PF00207">
    <property type="entry name" value="A2M"/>
    <property type="match status" value="1"/>
</dbReference>
<dbReference type="Pfam" id="PF07703">
    <property type="entry name" value="A2M_BRD"/>
    <property type="match status" value="1"/>
</dbReference>
<dbReference type="Pfam" id="PF07677">
    <property type="entry name" value="A2M_recep"/>
    <property type="match status" value="1"/>
</dbReference>
<dbReference type="Pfam" id="PF01821">
    <property type="entry name" value="ANATO"/>
    <property type="match status" value="1"/>
</dbReference>
<dbReference type="Pfam" id="PF21309">
    <property type="entry name" value="C5_CUB"/>
    <property type="match status" value="1"/>
</dbReference>
<dbReference type="Pfam" id="PF17790">
    <property type="entry name" value="MG1"/>
    <property type="match status" value="1"/>
</dbReference>
<dbReference type="Pfam" id="PF01835">
    <property type="entry name" value="MG2"/>
    <property type="match status" value="1"/>
</dbReference>
<dbReference type="Pfam" id="PF17791">
    <property type="entry name" value="MG3"/>
    <property type="match status" value="1"/>
</dbReference>
<dbReference type="Pfam" id="PF17789">
    <property type="entry name" value="MG4"/>
    <property type="match status" value="1"/>
</dbReference>
<dbReference type="Pfam" id="PF01759">
    <property type="entry name" value="NTR"/>
    <property type="match status" value="1"/>
</dbReference>
<dbReference type="Pfam" id="PF07678">
    <property type="entry name" value="TED_complement"/>
    <property type="match status" value="1"/>
</dbReference>
<dbReference type="SMART" id="SM01360">
    <property type="entry name" value="A2M"/>
    <property type="match status" value="1"/>
</dbReference>
<dbReference type="SMART" id="SM01359">
    <property type="entry name" value="A2M_N_2"/>
    <property type="match status" value="1"/>
</dbReference>
<dbReference type="SMART" id="SM01361">
    <property type="entry name" value="A2M_recep"/>
    <property type="match status" value="1"/>
</dbReference>
<dbReference type="SMART" id="SM00104">
    <property type="entry name" value="ANATO"/>
    <property type="match status" value="1"/>
</dbReference>
<dbReference type="SMART" id="SM00643">
    <property type="entry name" value="C345C"/>
    <property type="match status" value="1"/>
</dbReference>
<dbReference type="SUPFAM" id="SSF49410">
    <property type="entry name" value="Alpha-macroglobulin receptor domain"/>
    <property type="match status" value="1"/>
</dbReference>
<dbReference type="SUPFAM" id="SSF47686">
    <property type="entry name" value="Anaphylotoxins (complement system)"/>
    <property type="match status" value="1"/>
</dbReference>
<dbReference type="SUPFAM" id="SSF48239">
    <property type="entry name" value="Terpenoid cyclases/Protein prenyltransferases"/>
    <property type="match status" value="1"/>
</dbReference>
<dbReference type="SUPFAM" id="SSF50242">
    <property type="entry name" value="TIMP-like"/>
    <property type="match status" value="1"/>
</dbReference>
<dbReference type="PROSITE" id="PS01177">
    <property type="entry name" value="ANAPHYLATOXIN_1"/>
    <property type="match status" value="1"/>
</dbReference>
<dbReference type="PROSITE" id="PS01178">
    <property type="entry name" value="ANAPHYLATOXIN_2"/>
    <property type="match status" value="1"/>
</dbReference>
<dbReference type="PROSITE" id="PS50189">
    <property type="entry name" value="NTR"/>
    <property type="match status" value="1"/>
</dbReference>
<keyword id="KW-0002">3D-structure</keyword>
<keyword id="KW-0165">Cleavage on pair of basic residues</keyword>
<keyword id="KW-0179">Complement alternate pathway</keyword>
<keyword id="KW-0180">Complement pathway</keyword>
<keyword id="KW-0204">Cytolysis</keyword>
<keyword id="KW-0903">Direct protein sequencing</keyword>
<keyword id="KW-1015">Disulfide bond</keyword>
<keyword id="KW-0325">Glycoprotein</keyword>
<keyword id="KW-0391">Immunity</keyword>
<keyword id="KW-0395">Inflammatory response</keyword>
<keyword id="KW-0399">Innate immunity</keyword>
<keyword id="KW-0472">Membrane</keyword>
<keyword id="KW-0473">Membrane attack complex</keyword>
<keyword id="KW-1185">Reference proteome</keyword>
<keyword id="KW-0964">Secreted</keyword>
<keyword id="KW-0732">Signal</keyword>
<keyword id="KW-1052">Target cell membrane</keyword>
<keyword id="KW-1053">Target membrane</keyword>
<feature type="signal peptide" evidence="2">
    <location>
        <begin position="1"/>
        <end position="18"/>
    </location>
</feature>
<feature type="chain" id="PRO_0000453364" description="Complement C5 beta chain" evidence="7">
    <location>
        <begin position="19"/>
        <end position="674"/>
    </location>
</feature>
<feature type="propeptide" id="PRO_0000453365" evidence="1">
    <location>
        <begin position="675"/>
        <end position="678"/>
    </location>
</feature>
<feature type="chain" id="PRO_0000453366" description="Complement C5 alpha chain" evidence="7">
    <location>
        <begin position="679"/>
        <end position="1681"/>
    </location>
</feature>
<feature type="chain" id="PRO_0000005996" description="C5a anaphylatoxin" evidence="5 6">
    <location>
        <begin position="679"/>
        <end position="755"/>
    </location>
</feature>
<feature type="chain" id="PRO_0000453367" description="Complement C5b" evidence="7">
    <location>
        <begin position="756"/>
        <end position="1681"/>
    </location>
</feature>
<feature type="domain" description="Anaphylatoxin-like" evidence="3">
    <location>
        <begin position="702"/>
        <end position="736"/>
    </location>
</feature>
<feature type="domain" description="NTR" evidence="4">
    <location>
        <begin position="1536"/>
        <end position="1680"/>
    </location>
</feature>
<feature type="region of interest" description="Involved in C5AR1 binding" evidence="1">
    <location>
        <begin position="696"/>
        <end position="725"/>
    </location>
</feature>
<feature type="site" description="Cleavage; by C5 convertase" evidence="1">
    <location>
        <begin position="755"/>
        <end position="756"/>
    </location>
</feature>
<feature type="glycosylation site" description="N-linked (GlcNAc...) asparagine" evidence="2">
    <location>
        <position position="72"/>
    </location>
</feature>
<feature type="glycosylation site" description="N-linked (GlcNAc...) asparagine" evidence="2">
    <location>
        <position position="321"/>
    </location>
</feature>
<feature type="glycosylation site" description="N-linked (GlcNAc...) asparagine" evidence="2">
    <location>
        <position position="915"/>
    </location>
</feature>
<feature type="glycosylation site" description="N-linked (GlcNAc...) asparagine" evidence="2">
    <location>
        <position position="1119"/>
    </location>
</feature>
<feature type="glycosylation site" description="N-linked (GlcNAc...) asparagine" evidence="2">
    <location>
        <position position="1318"/>
    </location>
</feature>
<feature type="glycosylation site" description="N-linked (GlcNAc...) asparagine" evidence="2">
    <location>
        <position position="1634"/>
    </location>
</feature>
<feature type="disulfide bond" evidence="1">
    <location>
        <begin position="567"/>
        <end position="814"/>
    </location>
</feature>
<feature type="disulfide bond" evidence="1">
    <location>
        <begin position="635"/>
        <end position="670"/>
    </location>
</feature>
<feature type="disulfide bond" evidence="8 9">
    <location>
        <begin position="702"/>
        <end position="728"/>
    </location>
</feature>
<feature type="disulfide bond" evidence="8 9">
    <location>
        <begin position="703"/>
        <end position="735"/>
    </location>
</feature>
<feature type="disulfide bond" evidence="8 9">
    <location>
        <begin position="715"/>
        <end position="736"/>
    </location>
</feature>
<feature type="disulfide bond" evidence="1">
    <location>
        <begin position="860"/>
        <end position="887"/>
    </location>
</feature>
<feature type="disulfide bond" evidence="1">
    <location>
        <begin position="870"/>
        <end position="1531"/>
    </location>
</feature>
<feature type="disulfide bond" evidence="1">
    <location>
        <begin position="1105"/>
        <end position="1163"/>
    </location>
</feature>
<feature type="disulfide bond" evidence="1">
    <location>
        <begin position="1379"/>
        <end position="1509"/>
    </location>
</feature>
<feature type="disulfide bond" evidence="1">
    <location>
        <begin position="1409"/>
        <end position="1478"/>
    </location>
</feature>
<feature type="disulfide bond" evidence="1">
    <location>
        <begin position="1524"/>
        <end position="1529"/>
    </location>
</feature>
<feature type="disulfide bond" evidence="1">
    <location>
        <begin position="1536"/>
        <end position="1610"/>
    </location>
</feature>
<feature type="disulfide bond" evidence="1">
    <location>
        <begin position="1557"/>
        <end position="1680"/>
    </location>
</feature>
<feature type="disulfide bond" evidence="1">
    <location>
        <begin position="1658"/>
        <end position="1661"/>
    </location>
</feature>
<feature type="sequence conflict" description="In Ref. 3; AA sequence and 4; AA sequence." evidence="7" ref="3 4">
    <original>N</original>
    <variation>K</variation>
    <location>
        <position position="733"/>
    </location>
</feature>
<feature type="sequence conflict" description="In Ref. 3; AA sequence." evidence="7" ref="3">
    <original>ADK</original>
    <variation>DP</variation>
    <location>
        <begin position="739"/>
        <end position="741"/>
    </location>
</feature>
<feature type="sequence conflict" description="In Ref. 4; AA sequence." evidence="7" ref="4">
    <original>K</original>
    <variation>H</variation>
    <location>
        <position position="741"/>
    </location>
</feature>
<feature type="sequence conflict" description="In Ref. 4; AA sequence." evidence="7" ref="4">
    <original>ESH</original>
    <variation>NES</variation>
    <location>
        <begin position="745"/>
        <end position="747"/>
    </location>
</feature>
<feature type="sequence conflict" description="In Ref. 3; AA sequence." evidence="7" ref="3">
    <original>ESH</original>
    <variation>NQS</variation>
    <location>
        <begin position="745"/>
        <end position="747"/>
    </location>
</feature>
<feature type="helix" evidence="10">
    <location>
        <begin position="683"/>
        <end position="691"/>
    </location>
</feature>
<feature type="helix" evidence="10">
    <location>
        <begin position="697"/>
        <end position="707"/>
    </location>
</feature>
<feature type="helix" evidence="10">
    <location>
        <begin position="715"/>
        <end position="719"/>
    </location>
</feature>
<feature type="helix" evidence="10">
    <location>
        <begin position="726"/>
        <end position="749"/>
    </location>
</feature>
<sequence>MGLWGLLCLLIFLDKTWGQEQTYVISAPKIFRVGSSENVVIQAHGYTEAFDATISLKSYPDKKVTYSSGYVNLSPENKFQNSALLTLPPKQFPRDENPVSHVYLEVVSMHFSKSKKIPITYDNGFLFIHTDKPVYTPDQSVKIRVYSLSDDLKPAKRETVLTFVDPEGTEVDIVEENDYTGIISFPDFKIPSNPKYGVWTIKAKYKKDFTTTGTAYFEVKEYVLPRFSVSIEPESNFIGYKNFKNFEITVKARYFYNKMVPDAEVYIFFGLREDIKEDEKQMMHKAMQAATLMDGAAQTCWLAETEVREINYNMFEDRNNNYSYIACTVTESSGGFSEEAEIPGIKYVLSPYTLNLVATPLFLKPGIPFSIKVQVKDSLEQLVGGVPVTLMAQTVNVNQETSDLEPKRSITHSADGVASFVVNLPSEVTSLKFEVKTDAPELPEENQASKEYEAVTYSSLSQSYIYIGWTENYKPMLVGEYLNIIVTPKSPYIDKITHYNYLILSKGKIVQYGTKEKLLYSSYQNINIPVTQDMVPSARLLVYYIVTGEQTAELVADAVWINIEEKCGNQLQVHLSPDKDVYSPGQTVSLDMVTEADSWVALSAVDSAVYGVRGKAKRAMQRVFQAFDDKSDLGCGAGGGRDNVDVFHLAGLTFLTNANADDSQYHDDSCKEILRPKRDLQLLHQKVEEQAAKYKHRVPKKCCYDGARENKYETCEQRVARVTIGPHCIRAFNECCTIADKIRKESHHKGMLLGRIQIKALLPVMKAEIRSYFPESWLWEVHRVPKRNQLQVALPDSLTTWEIQGIGISDNGICVADTLKAKVFKDVFLEMNIPYSVVRGEQIQLKGTVYNYRTSGTMFCVKMSAVEGICTPGSSAASPQTSRSSRCVRQRIEGSSSHLVTFSLLPLEIGLHSINFSLETSFGKEILVKTLRVVPEGIKRESYAGVTLDPRGVYGIVNRRKEFPYRIPLDLVPKTNVKRILSVKGLLIGEFLSTVLSKEGIDILTHLPKGSAEAELMSIVPVFYVFHYLEAGNHWNIFHPDTLARKQSLQKKIKEGLVSVMSYRNADYSYSMWKGASSSAWLTAFALRVLGQVNKYVKQDQYSICNSLLWLIEKCQLENGSFKENSQYLPIKLQGTLPAEAQENTLYLTAFSVIGIRKAIGICPTEKIYTALAKADSFLLERTLPSKSTFTLAIVAYALSLGDRTHPKFRSIVSALKREALVKGDPPIYRFWRDTLQRPDSSAPNSGTAGMVETTAYALLTSLNLKETSYVNPIIKWLSEEQRYGGGFYSTQDTINAIEGLTEYSLLVKQLHLDMDINVSYKHKGDFYQYKVTEKNFLGRPVEVPLNDDLIVTTGYSSGLATVYVKTVVHKTSVAEEFCSFYLKIDTQEVEASSYLSYSDSGHKRIIACASYKPSKEESASGSSHAVMDILLPTGIGANQEDLRALVEGVDQLLTDYQIKDSHVILQLNSIPSRDFLCVRFRIFELFQVGFLNPATFTVYEYHRPDKQCTMIYSTSDTNLQRVCEGAACKCVEADCGQLQAELDLAISADTRKETACKPEIAYAYKVRITSATEENIFVKYTATLLDIYKTGEAAAEKDSEITFIKKISCTNANLVKGKQYLIMGKEALQIKHNFSFKYIYPLDSSTWIEYWPTDTTCPSCQAFVANLDEFAEDIFLNGCE</sequence>
<gene>
    <name type="primary">C5</name>
</gene>
<proteinExistence type="evidence at protein level"/>
<accession>P08650</accession>
<accession>A0A096P6L9</accession>
<accession>Q63078</accession>
<protein>
    <recommendedName>
        <fullName>Complement C5</fullName>
    </recommendedName>
    <component>
        <recommendedName>
            <fullName>Complement C5 beta chain</fullName>
        </recommendedName>
    </component>
    <component>
        <recommendedName>
            <fullName>Complement C5 alpha chain</fullName>
        </recommendedName>
    </component>
    <component>
        <recommendedName>
            <fullName>C5a anaphylatoxin</fullName>
        </recommendedName>
    </component>
    <component>
        <recommendedName>
            <fullName>Complement C5b</fullName>
        </recommendedName>
        <alternativeName>
            <fullName>Complement C5 alpha' chain</fullName>
        </alternativeName>
    </component>
</protein>
<comment type="function">
    <text evidence="1">Precursor of the C5a anaphylatoxin and complement C5b components of the complement pathways, which consist in a cascade of proteins that leads to phagocytosis and breakdown of pathogens and signaling that strengthens the adaptive immune system. Activated downstream of classical, alternative, lectin and GZMK complement pathways.</text>
</comment>
<comment type="function">
    <molecule>Complement C5b</molecule>
    <text evidence="1">Component of the membrane attack complex (MAC), a multiprotein complex activated by the complement cascade, which inserts into a target cell membrane and forms a pore, leading to target cell membrane rupture and cell lysis. Complement C5b is generated following cleavage by C5 convertase and initiates formation of the MAC complex: C5b binds sequentially C6, C7, C8 and multiple copies of the pore-forming subunit C9. During MAC complex assembly, the C5b6 subcomplex, composed of complement C5b and C6, associates with the outer leaflet of target cell membrane, reducing the energy for membrane bending.</text>
</comment>
<comment type="function">
    <molecule>C5a anaphylatoxin</molecule>
    <text evidence="1">Mediator of local inflammatory process released following cleavage by C5 convertase. Acts by binding to its receptor (C5AR1 or C5AR2), activating G protein-coupled receptor signaling and inducing a variety of responses including intracellular calcium release, contraction of smooth muscle, increased vascular permeability, and histamine release from mast cells and basophilic leukocytes. C5a is also a potent chemokine which stimulates the locomotion of polymorphonuclear leukocytes and directs their migration toward sites of inflammation.</text>
</comment>
<comment type="activity regulation">
    <molecule>Complement C5b</molecule>
    <text evidence="1">Membrane attack complex (MAC) assembly is inhibited by CD59, thereby protecting self-cells from damage during complement activation. MAC assembly is also inhibited by clusterin (CLU) chaperones that inhibit polymerization of C9.</text>
</comment>
<comment type="subunit">
    <text evidence="1">In absence of complement activation, the C5 precursor is first processed by the removal of 4 basic residues, forming two chains, beta and alpha, linked by a disulfide bond.</text>
</comment>
<comment type="subunit">
    <molecule>Complement C5b</molecule>
    <text evidence="1">Complement C5b is composed of complement C5b and complement C5 beta chains that are associated via disulfide bonds. Component of the membrane attack complex (MAC), composed of complement C5b, C6, C7, C8A, C8B, C8G and multiple copies of the pore-forming subunit C9. Interacts with the tick complement inhibitors OmCI, RaCI1 and CirpT1. Interacts with cobra venom factor (CVF).</text>
</comment>
<comment type="subcellular location">
    <subcellularLocation>
        <location evidence="5">Secreted</location>
    </subcellularLocation>
</comment>
<comment type="subcellular location">
    <molecule>Complement C5b</molecule>
    <subcellularLocation>
        <location evidence="1">Secreted</location>
    </subcellularLocation>
    <subcellularLocation>
        <location evidence="1">Target cell membrane</location>
    </subcellularLocation>
    <text evidence="1">Secreted as soluble protein. Inserts into the cell membrane of target cells.</text>
</comment>
<comment type="subcellular location">
    <molecule>C5a anaphylatoxin</molecule>
    <subcellularLocation>
        <location evidence="1">Secreted</location>
    </subcellularLocation>
</comment>
<comment type="PTM">
    <text evidence="1">C5 precursor is first processed by the removal of 4 basic residues, forming two chains, beta and alpha, linked by a disulfide bond. During activation of the complement systems, the alpha chain is cleaved into C5a and C5b by the C5 convertase: C5b stays linked to the beta chain, while C5a is released in the plasma. The alpha chain is cleaved by the serine protease complement C2b component of the C5 convertase to generate C5a and C5b following activation by the classical, lectin and GZMK complement systems. The alpha chain is cleaved by CFB component of the C5 convertase to generate C5a and C5b following activation by the alternative complement system.</text>
</comment>